<accession>P9WIA8</accession>
<accession>L0T7L1</accession>
<accession>O06792</accession>
<accession>P0A5R8</accession>
<accession>Q9XB13</accession>
<organism>
    <name type="scientific">Mycobacterium tuberculosis (strain CDC 1551 / Oshkosh)</name>
    <dbReference type="NCBI Taxonomy" id="83331"/>
    <lineage>
        <taxon>Bacteria</taxon>
        <taxon>Bacillati</taxon>
        <taxon>Actinomycetota</taxon>
        <taxon>Actinomycetes</taxon>
        <taxon>Mycobacteriales</taxon>
        <taxon>Mycobacteriaceae</taxon>
        <taxon>Mycobacterium</taxon>
        <taxon>Mycobacterium tuberculosis complex</taxon>
    </lineage>
</organism>
<feature type="signal peptide" description="Tat-type signal" evidence="2">
    <location>
        <begin position="1"/>
        <end position="37"/>
    </location>
</feature>
<feature type="chain" id="PRO_0000428039" description="Phospholipase C D">
    <location>
        <begin position="38"/>
        <end position="514"/>
    </location>
</feature>
<feature type="region of interest" description="Disordered" evidence="3">
    <location>
        <begin position="492"/>
        <end position="514"/>
    </location>
</feature>
<protein>
    <recommendedName>
        <fullName evidence="6">Phospholipase C D</fullName>
        <shortName evidence="6">PLC-D</shortName>
        <ecNumber evidence="4">3.1.4.3</ecNumber>
    </recommendedName>
</protein>
<sequence>MSQSHIGGVSRREFLAKVAAGGAGALMSFAGPVIEKAYGAGPCSGHLTDIEHFVFFMQENRSFDHYFGTLSGTDGFNTVSPLFQQKGWNPMTQALDATGVTMPYRFDTTRGPFLDGACVNDPDHSWVAMHESWNGGVNDNWLPAQAKTRSAAHTPTVMGYYTRQDIPIHYLLADAFTVCDRYFCSVLGPTLPNRLYWLSATIDPDGQNGGPELQSPTFQPVRRFGWRIMPQNLSDAGVSWKVYRNKTLGPISSVLTYGSLVTSFKQSADPRSDLVRFGVAPSYPASFAADVLANRLPRVSWVIPNVLESEHPAVPAAAGAFAIVNILRILLANPAVWEKTALIVSYDENGGFFDHVVPATAPAGTPGEYVTVPDIDQVPGSGGIRGPIGLGFRVPCFVISPYSRGPQMVHDTFDHTSQLRLLETRFGVPVPNLTAWRRSVTGDMTSTFNFAVPPNSSWPNLDYPGLHALSTVPQCVPNAALGTINRGIPYRVPDPQIMPTQETTPTRGIPSGPC</sequence>
<evidence type="ECO:0000250" key="1">
    <source>
        <dbReference type="UniProtKB" id="P9WIA9"/>
    </source>
</evidence>
<evidence type="ECO:0000255" key="2">
    <source>
        <dbReference type="PROSITE-ProRule" id="PRU00648"/>
    </source>
</evidence>
<evidence type="ECO:0000256" key="3">
    <source>
        <dbReference type="SAM" id="MobiDB-lite"/>
    </source>
</evidence>
<evidence type="ECO:0000269" key="4">
    <source>
    </source>
</evidence>
<evidence type="ECO:0000303" key="5">
    <source>
    </source>
</evidence>
<evidence type="ECO:0000305" key="6"/>
<comment type="function">
    <text evidence="1 4">Involved in virulence (By similarity). Induces cytotoxic effects on mouse macrophage cell lines, via direct or indirect enzymatic hydrolysis of cell membrane phospholipids (By similarity). Hydrolyzes phosphatidylcholine (PubMed:12100560).</text>
</comment>
<comment type="catalytic activity">
    <reaction evidence="4">
        <text>a 1,2-diacyl-sn-glycero-3-phosphocholine + H2O = phosphocholine + a 1,2-diacyl-sn-glycerol + H(+)</text>
        <dbReference type="Rhea" id="RHEA:10604"/>
        <dbReference type="ChEBI" id="CHEBI:15377"/>
        <dbReference type="ChEBI" id="CHEBI:15378"/>
        <dbReference type="ChEBI" id="CHEBI:17815"/>
        <dbReference type="ChEBI" id="CHEBI:57643"/>
        <dbReference type="ChEBI" id="CHEBI:295975"/>
        <dbReference type="EC" id="3.1.4.3"/>
    </reaction>
    <physiologicalReaction direction="left-to-right" evidence="4">
        <dbReference type="Rhea" id="RHEA:10605"/>
    </physiologicalReaction>
</comment>
<comment type="subcellular location">
    <subcellularLocation>
        <location evidence="1">Secreted</location>
        <location evidence="1">Cell wall</location>
    </subcellularLocation>
    <text evidence="1">Remains associated with the cell.</text>
</comment>
<comment type="induction">
    <text evidence="4">Expression is induced in vitro in the presence of phosphatidylcholine.</text>
</comment>
<comment type="PTM">
    <text evidence="2">Predicted to be exported by the Tat system. The position of the signal peptide cleavage has not been experimentally proven.</text>
</comment>
<comment type="disruption phenotype">
    <text evidence="4">Disruption of the gene in the clinical strain Mt103 leads to a reduction of the phospholipase C activity of the mutant. The plcABCD mutant exhibits a dramatic decrease in phospholipase C activity. The quadruple mutant is attenuated in the mouse model of infection, but not in infected THP-1 cells.</text>
</comment>
<comment type="similarity">
    <text evidence="6">Belongs to the bacterial phospholipase C family.</text>
</comment>
<dbReference type="EC" id="3.1.4.3" evidence="4"/>
<dbReference type="EMBL" id="AE000516">
    <property type="protein sequence ID" value="AAK46072.1"/>
    <property type="molecule type" value="Genomic_DNA"/>
</dbReference>
<dbReference type="PIR" id="D70987">
    <property type="entry name" value="D70987"/>
</dbReference>
<dbReference type="RefSeq" id="WP_003900400.1">
    <property type="nucleotide sequence ID" value="NZ_KK341227.1"/>
</dbReference>
<dbReference type="SMR" id="P9WIA8"/>
<dbReference type="KEGG" id="mtc:MT1799"/>
<dbReference type="HOGENOM" id="CLU_008770_2_2_11"/>
<dbReference type="Proteomes" id="UP000001020">
    <property type="component" value="Chromosome"/>
</dbReference>
<dbReference type="GO" id="GO:0005576">
    <property type="term" value="C:extracellular region"/>
    <property type="evidence" value="ECO:0007669"/>
    <property type="project" value="UniProtKB-KW"/>
</dbReference>
<dbReference type="GO" id="GO:0034480">
    <property type="term" value="F:phosphatidylcholine phospholipase C activity"/>
    <property type="evidence" value="ECO:0007669"/>
    <property type="project" value="UniProtKB-EC"/>
</dbReference>
<dbReference type="FunFam" id="3.40.720.10:FF:000034">
    <property type="entry name" value="Membrane-associated phospholipase C"/>
    <property type="match status" value="1"/>
</dbReference>
<dbReference type="FunFam" id="3.40.720.10:FF:000036">
    <property type="entry name" value="Membrane-associated phospholipase C"/>
    <property type="match status" value="1"/>
</dbReference>
<dbReference type="Gene3D" id="3.40.720.10">
    <property type="entry name" value="Alkaline Phosphatase, subunit A"/>
    <property type="match status" value="2"/>
</dbReference>
<dbReference type="InterPro" id="IPR017850">
    <property type="entry name" value="Alkaline_phosphatase_core_sf"/>
</dbReference>
<dbReference type="InterPro" id="IPR007312">
    <property type="entry name" value="Phosphoesterase"/>
</dbReference>
<dbReference type="InterPro" id="IPR006311">
    <property type="entry name" value="TAT_signal"/>
</dbReference>
<dbReference type="PANTHER" id="PTHR31956:SF1">
    <property type="entry name" value="NON-SPECIFIC PHOSPHOLIPASE C1"/>
    <property type="match status" value="1"/>
</dbReference>
<dbReference type="PANTHER" id="PTHR31956">
    <property type="entry name" value="NON-SPECIFIC PHOSPHOLIPASE C4-RELATED"/>
    <property type="match status" value="1"/>
</dbReference>
<dbReference type="Pfam" id="PF04185">
    <property type="entry name" value="Phosphoesterase"/>
    <property type="match status" value="1"/>
</dbReference>
<dbReference type="PROSITE" id="PS51318">
    <property type="entry name" value="TAT"/>
    <property type="match status" value="1"/>
</dbReference>
<keyword id="KW-0134">Cell wall</keyword>
<keyword id="KW-0378">Hydrolase</keyword>
<keyword id="KW-1185">Reference proteome</keyword>
<keyword id="KW-0964">Secreted</keyword>
<keyword id="KW-0732">Signal</keyword>
<keyword id="KW-0843">Virulence</keyword>
<reference key="1">
    <citation type="journal article" date="2002" name="J. Bacteriol.">
        <title>Whole-genome comparison of Mycobacterium tuberculosis clinical and laboratory strains.</title>
        <authorList>
            <person name="Fleischmann R.D."/>
            <person name="Alland D."/>
            <person name="Eisen J.A."/>
            <person name="Carpenter L."/>
            <person name="White O."/>
            <person name="Peterson J.D."/>
            <person name="DeBoy R.T."/>
            <person name="Dodson R.J."/>
            <person name="Gwinn M.L."/>
            <person name="Haft D.H."/>
            <person name="Hickey E.K."/>
            <person name="Kolonay J.F."/>
            <person name="Nelson W.C."/>
            <person name="Umayam L.A."/>
            <person name="Ermolaeva M.D."/>
            <person name="Salzberg S.L."/>
            <person name="Delcher A."/>
            <person name="Utterback T.R."/>
            <person name="Weidman J.F."/>
            <person name="Khouri H.M."/>
            <person name="Gill J."/>
            <person name="Mikula A."/>
            <person name="Bishai W."/>
            <person name="Jacobs W.R. Jr."/>
            <person name="Venter J.C."/>
            <person name="Fraser C.M."/>
        </authorList>
    </citation>
    <scope>NUCLEOTIDE SEQUENCE [LARGE SCALE GENOMIC DNA]</scope>
    <source>
        <strain>CDC 1551 / Oshkosh</strain>
    </source>
</reference>
<reference key="2">
    <citation type="journal article" date="2002" name="Mol. Microbiol.">
        <title>Phospholipases C are involved in the virulence of Mycobacterium tuberculosis.</title>
        <authorList>
            <person name="Raynaud C."/>
            <person name="Guilhot C."/>
            <person name="Rauzier J."/>
            <person name="Bordat Y."/>
            <person name="Pelicic V."/>
            <person name="Manganelli R."/>
            <person name="Smith I."/>
            <person name="Gicquel B."/>
            <person name="Jackson M."/>
        </authorList>
    </citation>
    <scope>FUNCTION</scope>
    <scope>CATALYTIC ACTIVITY</scope>
    <scope>INDUCTION</scope>
    <scope>DISRUPTION PHENOTYPE</scope>
    <source>
        <strain>Mt103</strain>
    </source>
</reference>
<proteinExistence type="evidence at protein level"/>
<name>PHLD_MYCTO</name>
<gene>
    <name evidence="5" type="primary">plcD</name>
    <name type="ordered locus">MT1799</name>
</gene>